<name>C3H47_ARATH</name>
<evidence type="ECO:0000255" key="1">
    <source>
        <dbReference type="PROSITE-ProRule" id="PRU00723"/>
    </source>
</evidence>
<evidence type="ECO:0000256" key="2">
    <source>
        <dbReference type="SAM" id="MobiDB-lite"/>
    </source>
</evidence>
<evidence type="ECO:0000269" key="3">
    <source>
    </source>
</evidence>
<evidence type="ECO:0000305" key="4"/>
<proteinExistence type="evidence at transcript level"/>
<sequence>MCSGPKSNLCSSRTLTEIESRQKEEETMLLLEFAACDDLDSFKREVEEKGLDLDESGLWYCRRVGSKKMGLEERTPLMVAAMYGSIKVLTFIVSTGKSDVNRACGEERVTPLHCAVAGCSVNMIEVINVLLDASALVNSVDANGNQPLDVFVRVSRFVASPRRKAVELLLRGGGVGGLIDEAVEEEIKIVSKYPADASLPDINEGVYGSDEFRMYSFKVKPCSRAYSHDWTECAFVHPGENARRRDPRKYPYTCVPCPEFRKGSCPKGDSCEYAHGVFESWLHPAQYKTRLCKDETGCARKVCFFAHKREEMRPVNASTGSAVAQSPFSSLEMMPGLSPLAYSSGVSTPPVSPMANGVPSSPRNGGSWQNRVNTLTPPALQLNGGSRLKSTLSARDIDMEMEMELRLRGFGNNVEETFGSYVSSPSRNSQMGQNMNQHYPSSPVRQPPSQHGFESSAAAAVAVMKARSTAFAKRSLSFKPATQAAPQSNLSDWGSPNGKLEWGMKGEELNKMRRSVSFGIHGNNNNNAARDYRDEPDVSWVNSLVKDSTVVSERSFGMNERVRIMSWAEQMYREKEQTVV</sequence>
<gene>
    <name type="ordered locus">At3g55980</name>
    <name type="ORF">F27K19.160</name>
</gene>
<feature type="chain" id="PRO_0000372001" description="Zinc finger CCCH domain-containing protein 47">
    <location>
        <begin position="1"/>
        <end position="580"/>
    </location>
</feature>
<feature type="repeat" description="ANK 1">
    <location>
        <begin position="72"/>
        <end position="102"/>
    </location>
</feature>
<feature type="repeat" description="ANK 2">
    <location>
        <begin position="107"/>
        <end position="139"/>
    </location>
</feature>
<feature type="zinc finger region" description="C3H1-type 1" evidence="1">
    <location>
        <begin position="251"/>
        <end position="278"/>
    </location>
</feature>
<feature type="zinc finger region" description="C3H1-type 2" evidence="1">
    <location>
        <begin position="286"/>
        <end position="310"/>
    </location>
</feature>
<feature type="region of interest" description="Disordered" evidence="2">
    <location>
        <begin position="421"/>
        <end position="451"/>
    </location>
</feature>
<organism>
    <name type="scientific">Arabidopsis thaliana</name>
    <name type="common">Mouse-ear cress</name>
    <dbReference type="NCBI Taxonomy" id="3702"/>
    <lineage>
        <taxon>Eukaryota</taxon>
        <taxon>Viridiplantae</taxon>
        <taxon>Streptophyta</taxon>
        <taxon>Embryophyta</taxon>
        <taxon>Tracheophyta</taxon>
        <taxon>Spermatophyta</taxon>
        <taxon>Magnoliopsida</taxon>
        <taxon>eudicotyledons</taxon>
        <taxon>Gunneridae</taxon>
        <taxon>Pentapetalae</taxon>
        <taxon>rosids</taxon>
        <taxon>malvids</taxon>
        <taxon>Brassicales</taxon>
        <taxon>Brassicaceae</taxon>
        <taxon>Camelineae</taxon>
        <taxon>Arabidopsis</taxon>
    </lineage>
</organism>
<dbReference type="EMBL" id="AL163832">
    <property type="protein sequence ID" value="CAB87852.1"/>
    <property type="status" value="ALT_SEQ"/>
    <property type="molecule type" value="Genomic_DNA"/>
</dbReference>
<dbReference type="EMBL" id="CP002686">
    <property type="protein sequence ID" value="AEE79463.1"/>
    <property type="molecule type" value="Genomic_DNA"/>
</dbReference>
<dbReference type="EMBL" id="AY056282">
    <property type="protein sequence ID" value="AAL07131.1"/>
    <property type="molecule type" value="mRNA"/>
</dbReference>
<dbReference type="EMBL" id="BT008625">
    <property type="protein sequence ID" value="AAP40446.1"/>
    <property type="molecule type" value="mRNA"/>
</dbReference>
<dbReference type="EMBL" id="AK220723">
    <property type="protein sequence ID" value="BAD93854.1"/>
    <property type="status" value="ALT_INIT"/>
    <property type="molecule type" value="mRNA"/>
</dbReference>
<dbReference type="EMBL" id="AK226861">
    <property type="protein sequence ID" value="BAE98950.1"/>
    <property type="molecule type" value="mRNA"/>
</dbReference>
<dbReference type="PIR" id="T49210">
    <property type="entry name" value="T49210"/>
</dbReference>
<dbReference type="SMR" id="Q93ZS9"/>
<dbReference type="BioGRID" id="10080">
    <property type="interactions" value="11"/>
</dbReference>
<dbReference type="FunCoup" id="Q93ZS9">
    <property type="interactions" value="372"/>
</dbReference>
<dbReference type="IntAct" id="Q93ZS9">
    <property type="interactions" value="9"/>
</dbReference>
<dbReference type="STRING" id="3702.Q93ZS9"/>
<dbReference type="iPTMnet" id="Q93ZS9"/>
<dbReference type="PaxDb" id="3702-AT3G55980.1"/>
<dbReference type="ProteomicsDB" id="239204"/>
<dbReference type="EnsemblPlants" id="AT3G55980.1">
    <property type="protein sequence ID" value="AT3G55980.1"/>
    <property type="gene ID" value="AT3G55980"/>
</dbReference>
<dbReference type="Gramene" id="AT3G55980.1">
    <property type="protein sequence ID" value="AT3G55980.1"/>
    <property type="gene ID" value="AT3G55980"/>
</dbReference>
<dbReference type="KEGG" id="ath:AT3G55980"/>
<dbReference type="Araport" id="AT3G55980"/>
<dbReference type="TAIR" id="AT3G55980">
    <property type="gene designation" value="SZF1"/>
</dbReference>
<dbReference type="eggNOG" id="KOG1595">
    <property type="taxonomic scope" value="Eukaryota"/>
</dbReference>
<dbReference type="HOGENOM" id="CLU_015068_2_0_1"/>
<dbReference type="InParanoid" id="Q93ZS9"/>
<dbReference type="PhylomeDB" id="Q93ZS9"/>
<dbReference type="PRO" id="PR:Q93ZS9"/>
<dbReference type="Proteomes" id="UP000006548">
    <property type="component" value="Chromosome 3"/>
</dbReference>
<dbReference type="ExpressionAtlas" id="Q93ZS9">
    <property type="expression patterns" value="baseline and differential"/>
</dbReference>
<dbReference type="GO" id="GO:0005634">
    <property type="term" value="C:nucleus"/>
    <property type="evidence" value="ECO:0007669"/>
    <property type="project" value="UniProtKB-SubCell"/>
</dbReference>
<dbReference type="GO" id="GO:0003677">
    <property type="term" value="F:DNA binding"/>
    <property type="evidence" value="ECO:0007669"/>
    <property type="project" value="UniProtKB-KW"/>
</dbReference>
<dbReference type="GO" id="GO:0003700">
    <property type="term" value="F:DNA-binding transcription factor activity"/>
    <property type="evidence" value="ECO:0000250"/>
    <property type="project" value="TAIR"/>
</dbReference>
<dbReference type="GO" id="GO:0008270">
    <property type="term" value="F:zinc ion binding"/>
    <property type="evidence" value="ECO:0007669"/>
    <property type="project" value="UniProtKB-KW"/>
</dbReference>
<dbReference type="GO" id="GO:0071456">
    <property type="term" value="P:cellular response to hypoxia"/>
    <property type="evidence" value="ECO:0007007"/>
    <property type="project" value="TAIR"/>
</dbReference>
<dbReference type="GO" id="GO:0006355">
    <property type="term" value="P:regulation of DNA-templated transcription"/>
    <property type="evidence" value="ECO:0000304"/>
    <property type="project" value="TAIR"/>
</dbReference>
<dbReference type="FunFam" id="1.25.40.20:FF:000496">
    <property type="entry name" value="Zinc finger CCCH domain-containing protein 29"/>
    <property type="match status" value="1"/>
</dbReference>
<dbReference type="FunFam" id="3.30.1370.210:FF:000009">
    <property type="entry name" value="Zinc finger CCCH domain-containing protein 66"/>
    <property type="match status" value="1"/>
</dbReference>
<dbReference type="Gene3D" id="3.30.1370.210">
    <property type="match status" value="1"/>
</dbReference>
<dbReference type="Gene3D" id="1.25.40.20">
    <property type="entry name" value="Ankyrin repeat-containing domain"/>
    <property type="match status" value="1"/>
</dbReference>
<dbReference type="InterPro" id="IPR002110">
    <property type="entry name" value="Ankyrin_rpt"/>
</dbReference>
<dbReference type="InterPro" id="IPR036770">
    <property type="entry name" value="Ankyrin_rpt-contain_sf"/>
</dbReference>
<dbReference type="InterPro" id="IPR045234">
    <property type="entry name" value="Unkempt-like"/>
</dbReference>
<dbReference type="InterPro" id="IPR000571">
    <property type="entry name" value="Znf_CCCH"/>
</dbReference>
<dbReference type="PANTHER" id="PTHR14493">
    <property type="entry name" value="UNKEMPT FAMILY MEMBER"/>
    <property type="match status" value="1"/>
</dbReference>
<dbReference type="PANTHER" id="PTHR14493:SF86">
    <property type="entry name" value="ZINC FINGER CCCH DOMAIN-CONTAINING PROTEIN 47"/>
    <property type="match status" value="1"/>
</dbReference>
<dbReference type="Pfam" id="PF12796">
    <property type="entry name" value="Ank_2"/>
    <property type="match status" value="1"/>
</dbReference>
<dbReference type="Pfam" id="PF00642">
    <property type="entry name" value="zf-CCCH"/>
    <property type="match status" value="1"/>
</dbReference>
<dbReference type="Pfam" id="PF25512">
    <property type="entry name" value="zf-CCCH_AtC3H23"/>
    <property type="match status" value="1"/>
</dbReference>
<dbReference type="SMART" id="SM00248">
    <property type="entry name" value="ANK"/>
    <property type="match status" value="2"/>
</dbReference>
<dbReference type="SMART" id="SM00356">
    <property type="entry name" value="ZnF_C3H1"/>
    <property type="match status" value="2"/>
</dbReference>
<dbReference type="SUPFAM" id="SSF48403">
    <property type="entry name" value="Ankyrin repeat"/>
    <property type="match status" value="1"/>
</dbReference>
<dbReference type="PROSITE" id="PS50297">
    <property type="entry name" value="ANK_REP_REGION"/>
    <property type="match status" value="1"/>
</dbReference>
<dbReference type="PROSITE" id="PS50088">
    <property type="entry name" value="ANK_REPEAT"/>
    <property type="match status" value="1"/>
</dbReference>
<dbReference type="PROSITE" id="PS50103">
    <property type="entry name" value="ZF_C3H1"/>
    <property type="match status" value="2"/>
</dbReference>
<keyword id="KW-0040">ANK repeat</keyword>
<keyword id="KW-0238">DNA-binding</keyword>
<keyword id="KW-0479">Metal-binding</keyword>
<keyword id="KW-0539">Nucleus</keyword>
<keyword id="KW-1185">Reference proteome</keyword>
<keyword id="KW-0677">Repeat</keyword>
<keyword id="KW-0346">Stress response</keyword>
<keyword id="KW-0862">Zinc</keyword>
<keyword id="KW-0863">Zinc-finger</keyword>
<accession>Q93ZS9</accession>
<accession>Q570I5</accession>
<accession>Q9LY47</accession>
<protein>
    <recommendedName>
        <fullName>Zinc finger CCCH domain-containing protein 47</fullName>
        <shortName>AtC3H47</shortName>
    </recommendedName>
    <alternativeName>
        <fullName>AtSZF1</fullName>
    </alternativeName>
</protein>
<comment type="function">
    <text evidence="3">Involved in salt stress response. May positively modulate plant tolerance to salt stress.</text>
</comment>
<comment type="subcellular location">
    <subcellularLocation>
        <location evidence="3">Nucleus</location>
    </subcellularLocation>
</comment>
<comment type="tissue specificity">
    <text evidence="3">Expressed in roots and anthers.</text>
</comment>
<comment type="induction">
    <text evidence="3">By salt stress.</text>
</comment>
<comment type="sequence caution" evidence="4">
    <conflict type="erroneous initiation">
        <sequence resource="EMBL-CDS" id="BAD93854"/>
    </conflict>
</comment>
<comment type="sequence caution" evidence="4">
    <conflict type="erroneous gene model prediction">
        <sequence resource="EMBL-CDS" id="CAB87852"/>
    </conflict>
</comment>
<reference key="1">
    <citation type="journal article" date="2000" name="Nature">
        <title>Sequence and analysis of chromosome 3 of the plant Arabidopsis thaliana.</title>
        <authorList>
            <person name="Salanoubat M."/>
            <person name="Lemcke K."/>
            <person name="Rieger M."/>
            <person name="Ansorge W."/>
            <person name="Unseld M."/>
            <person name="Fartmann B."/>
            <person name="Valle G."/>
            <person name="Bloecker H."/>
            <person name="Perez-Alonso M."/>
            <person name="Obermaier B."/>
            <person name="Delseny M."/>
            <person name="Boutry M."/>
            <person name="Grivell L.A."/>
            <person name="Mache R."/>
            <person name="Puigdomenech P."/>
            <person name="De Simone V."/>
            <person name="Choisne N."/>
            <person name="Artiguenave F."/>
            <person name="Robert C."/>
            <person name="Brottier P."/>
            <person name="Wincker P."/>
            <person name="Cattolico L."/>
            <person name="Weissenbach J."/>
            <person name="Saurin W."/>
            <person name="Quetier F."/>
            <person name="Schaefer M."/>
            <person name="Mueller-Auer S."/>
            <person name="Gabel C."/>
            <person name="Fuchs M."/>
            <person name="Benes V."/>
            <person name="Wurmbach E."/>
            <person name="Drzonek H."/>
            <person name="Erfle H."/>
            <person name="Jordan N."/>
            <person name="Bangert S."/>
            <person name="Wiedelmann R."/>
            <person name="Kranz H."/>
            <person name="Voss H."/>
            <person name="Holland R."/>
            <person name="Brandt P."/>
            <person name="Nyakatura G."/>
            <person name="Vezzi A."/>
            <person name="D'Angelo M."/>
            <person name="Pallavicini A."/>
            <person name="Toppo S."/>
            <person name="Simionati B."/>
            <person name="Conrad A."/>
            <person name="Hornischer K."/>
            <person name="Kauer G."/>
            <person name="Loehnert T.-H."/>
            <person name="Nordsiek G."/>
            <person name="Reichelt J."/>
            <person name="Scharfe M."/>
            <person name="Schoen O."/>
            <person name="Bargues M."/>
            <person name="Terol J."/>
            <person name="Climent J."/>
            <person name="Navarro P."/>
            <person name="Collado C."/>
            <person name="Perez-Perez A."/>
            <person name="Ottenwaelder B."/>
            <person name="Duchemin D."/>
            <person name="Cooke R."/>
            <person name="Laudie M."/>
            <person name="Berger-Llauro C."/>
            <person name="Purnelle B."/>
            <person name="Masuy D."/>
            <person name="de Haan M."/>
            <person name="Maarse A.C."/>
            <person name="Alcaraz J.-P."/>
            <person name="Cottet A."/>
            <person name="Casacuberta E."/>
            <person name="Monfort A."/>
            <person name="Argiriou A."/>
            <person name="Flores M."/>
            <person name="Liguori R."/>
            <person name="Vitale D."/>
            <person name="Mannhaupt G."/>
            <person name="Haase D."/>
            <person name="Schoof H."/>
            <person name="Rudd S."/>
            <person name="Zaccaria P."/>
            <person name="Mewes H.-W."/>
            <person name="Mayer K.F.X."/>
            <person name="Kaul S."/>
            <person name="Town C.D."/>
            <person name="Koo H.L."/>
            <person name="Tallon L.J."/>
            <person name="Jenkins J."/>
            <person name="Rooney T."/>
            <person name="Rizzo M."/>
            <person name="Walts A."/>
            <person name="Utterback T."/>
            <person name="Fujii C.Y."/>
            <person name="Shea T.P."/>
            <person name="Creasy T.H."/>
            <person name="Haas B."/>
            <person name="Maiti R."/>
            <person name="Wu D."/>
            <person name="Peterson J."/>
            <person name="Van Aken S."/>
            <person name="Pai G."/>
            <person name="Militscher J."/>
            <person name="Sellers P."/>
            <person name="Gill J.E."/>
            <person name="Feldblyum T.V."/>
            <person name="Preuss D."/>
            <person name="Lin X."/>
            <person name="Nierman W.C."/>
            <person name="Salzberg S.L."/>
            <person name="White O."/>
            <person name="Venter J.C."/>
            <person name="Fraser C.M."/>
            <person name="Kaneko T."/>
            <person name="Nakamura Y."/>
            <person name="Sato S."/>
            <person name="Kato T."/>
            <person name="Asamizu E."/>
            <person name="Sasamoto S."/>
            <person name="Kimura T."/>
            <person name="Idesawa K."/>
            <person name="Kawashima K."/>
            <person name="Kishida Y."/>
            <person name="Kiyokawa C."/>
            <person name="Kohara M."/>
            <person name="Matsumoto M."/>
            <person name="Matsuno A."/>
            <person name="Muraki A."/>
            <person name="Nakayama S."/>
            <person name="Nakazaki N."/>
            <person name="Shinpo S."/>
            <person name="Takeuchi C."/>
            <person name="Wada T."/>
            <person name="Watanabe A."/>
            <person name="Yamada M."/>
            <person name="Yasuda M."/>
            <person name="Tabata S."/>
        </authorList>
    </citation>
    <scope>NUCLEOTIDE SEQUENCE [LARGE SCALE GENOMIC DNA]</scope>
    <source>
        <strain>cv. Columbia</strain>
    </source>
</reference>
<reference key="2">
    <citation type="journal article" date="2017" name="Plant J.">
        <title>Araport11: a complete reannotation of the Arabidopsis thaliana reference genome.</title>
        <authorList>
            <person name="Cheng C.Y."/>
            <person name="Krishnakumar V."/>
            <person name="Chan A.P."/>
            <person name="Thibaud-Nissen F."/>
            <person name="Schobel S."/>
            <person name="Town C.D."/>
        </authorList>
    </citation>
    <scope>GENOME REANNOTATION</scope>
    <source>
        <strain>cv. Columbia</strain>
    </source>
</reference>
<reference key="3">
    <citation type="journal article" date="2003" name="Science">
        <title>Empirical analysis of transcriptional activity in the Arabidopsis genome.</title>
        <authorList>
            <person name="Yamada K."/>
            <person name="Lim J."/>
            <person name="Dale J.M."/>
            <person name="Chen H."/>
            <person name="Shinn P."/>
            <person name="Palm C.J."/>
            <person name="Southwick A.M."/>
            <person name="Wu H.C."/>
            <person name="Kim C.J."/>
            <person name="Nguyen M."/>
            <person name="Pham P.K."/>
            <person name="Cheuk R.F."/>
            <person name="Karlin-Newmann G."/>
            <person name="Liu S.X."/>
            <person name="Lam B."/>
            <person name="Sakano H."/>
            <person name="Wu T."/>
            <person name="Yu G."/>
            <person name="Miranda M."/>
            <person name="Quach H.L."/>
            <person name="Tripp M."/>
            <person name="Chang C.H."/>
            <person name="Lee J.M."/>
            <person name="Toriumi M.J."/>
            <person name="Chan M.M."/>
            <person name="Tang C.C."/>
            <person name="Onodera C.S."/>
            <person name="Deng J.M."/>
            <person name="Akiyama K."/>
            <person name="Ansari Y."/>
            <person name="Arakawa T."/>
            <person name="Banh J."/>
            <person name="Banno F."/>
            <person name="Bowser L."/>
            <person name="Brooks S.Y."/>
            <person name="Carninci P."/>
            <person name="Chao Q."/>
            <person name="Choy N."/>
            <person name="Enju A."/>
            <person name="Goldsmith A.D."/>
            <person name="Gurjal M."/>
            <person name="Hansen N.F."/>
            <person name="Hayashizaki Y."/>
            <person name="Johnson-Hopson C."/>
            <person name="Hsuan V.W."/>
            <person name="Iida K."/>
            <person name="Karnes M."/>
            <person name="Khan S."/>
            <person name="Koesema E."/>
            <person name="Ishida J."/>
            <person name="Jiang P.X."/>
            <person name="Jones T."/>
            <person name="Kawai J."/>
            <person name="Kamiya A."/>
            <person name="Meyers C."/>
            <person name="Nakajima M."/>
            <person name="Narusaka M."/>
            <person name="Seki M."/>
            <person name="Sakurai T."/>
            <person name="Satou M."/>
            <person name="Tamse R."/>
            <person name="Vaysberg M."/>
            <person name="Wallender E.K."/>
            <person name="Wong C."/>
            <person name="Yamamura Y."/>
            <person name="Yuan S."/>
            <person name="Shinozaki K."/>
            <person name="Davis R.W."/>
            <person name="Theologis A."/>
            <person name="Ecker J.R."/>
        </authorList>
    </citation>
    <scope>NUCLEOTIDE SEQUENCE [LARGE SCALE MRNA]</scope>
    <source>
        <strain>cv. Columbia</strain>
    </source>
</reference>
<reference key="4">
    <citation type="submission" date="2006-07" db="EMBL/GenBank/DDBJ databases">
        <title>Large-scale analysis of RIKEN Arabidopsis full-length (RAFL) cDNAs.</title>
        <authorList>
            <person name="Totoki Y."/>
            <person name="Seki M."/>
            <person name="Ishida J."/>
            <person name="Nakajima M."/>
            <person name="Enju A."/>
            <person name="Kamiya A."/>
            <person name="Narusaka M."/>
            <person name="Shin-i T."/>
            <person name="Nakagawa M."/>
            <person name="Sakamoto N."/>
            <person name="Oishi K."/>
            <person name="Kohara Y."/>
            <person name="Kobayashi M."/>
            <person name="Toyoda A."/>
            <person name="Sakaki Y."/>
            <person name="Sakurai T."/>
            <person name="Iida K."/>
            <person name="Akiyama K."/>
            <person name="Satou M."/>
            <person name="Toyoda T."/>
            <person name="Konagaya A."/>
            <person name="Carninci P."/>
            <person name="Kawai J."/>
            <person name="Hayashizaki Y."/>
            <person name="Shinozaki K."/>
        </authorList>
    </citation>
    <scope>NUCLEOTIDE SEQUENCE [LARGE SCALE MRNA]</scope>
    <source>
        <strain>cv. Columbia</strain>
    </source>
</reference>
<reference key="5">
    <citation type="journal article" date="2007" name="Plant Cell Physiol.">
        <title>The CCCH-type zinc finger proteins AtSZF1 and AtSZF2 regulate salt stress responses in Arabidopsis.</title>
        <authorList>
            <person name="Sun J."/>
            <person name="Jiang H."/>
            <person name="Xu Y."/>
            <person name="Li H."/>
            <person name="Wu X."/>
            <person name="Xie Q."/>
            <person name="Li C."/>
        </authorList>
    </citation>
    <scope>FUNCTION</scope>
    <scope>SUBCELLULAR LOCATION</scope>
    <scope>TISSUE SPECIFICITY</scope>
    <scope>INDUCTION</scope>
</reference>
<reference key="6">
    <citation type="journal article" date="2008" name="BMC Genomics">
        <title>Genome-wide analysis of CCCH zinc finger family in Arabidopsis and rice.</title>
        <authorList>
            <person name="Wang D."/>
            <person name="Guo Y."/>
            <person name="Wu C."/>
            <person name="Yang G."/>
            <person name="Li Y."/>
            <person name="Zheng C."/>
        </authorList>
    </citation>
    <scope>NOMENCLATURE</scope>
</reference>